<accession>A4STK9</accession>
<reference key="1">
    <citation type="journal article" date="2008" name="BMC Genomics">
        <title>The genome of Aeromonas salmonicida subsp. salmonicida A449: insights into the evolution of a fish pathogen.</title>
        <authorList>
            <person name="Reith M.E."/>
            <person name="Singh R.K."/>
            <person name="Curtis B."/>
            <person name="Boyd J.M."/>
            <person name="Bouevitch A."/>
            <person name="Kimball J."/>
            <person name="Munholland J."/>
            <person name="Murphy C."/>
            <person name="Sarty D."/>
            <person name="Williams J."/>
            <person name="Nash J.H."/>
            <person name="Johnson S.C."/>
            <person name="Brown L.L."/>
        </authorList>
    </citation>
    <scope>NUCLEOTIDE SEQUENCE [LARGE SCALE GENOMIC DNA]</scope>
    <source>
        <strain>A449</strain>
    </source>
</reference>
<gene>
    <name evidence="1" type="primary">ubiB</name>
    <name type="ordered locus">ASA_4307</name>
</gene>
<proteinExistence type="inferred from homology"/>
<dbReference type="EC" id="2.7.-.-" evidence="1"/>
<dbReference type="EMBL" id="CP000644">
    <property type="protein sequence ID" value="ABO92231.1"/>
    <property type="molecule type" value="Genomic_DNA"/>
</dbReference>
<dbReference type="RefSeq" id="WP_005320707.1">
    <property type="nucleotide sequence ID" value="NC_009348.1"/>
</dbReference>
<dbReference type="SMR" id="A4STK9"/>
<dbReference type="STRING" id="29491.GCA_000820065_02790"/>
<dbReference type="KEGG" id="asa:ASA_4307"/>
<dbReference type="PATRIC" id="fig|382245.13.peg.4272"/>
<dbReference type="eggNOG" id="COG0661">
    <property type="taxonomic scope" value="Bacteria"/>
</dbReference>
<dbReference type="HOGENOM" id="CLU_006533_0_0_6"/>
<dbReference type="UniPathway" id="UPA00232"/>
<dbReference type="Proteomes" id="UP000000225">
    <property type="component" value="Chromosome"/>
</dbReference>
<dbReference type="GO" id="GO:0005886">
    <property type="term" value="C:plasma membrane"/>
    <property type="evidence" value="ECO:0007669"/>
    <property type="project" value="UniProtKB-SubCell"/>
</dbReference>
<dbReference type="GO" id="GO:0005524">
    <property type="term" value="F:ATP binding"/>
    <property type="evidence" value="ECO:0007669"/>
    <property type="project" value="UniProtKB-KW"/>
</dbReference>
<dbReference type="GO" id="GO:0004672">
    <property type="term" value="F:protein kinase activity"/>
    <property type="evidence" value="ECO:0007669"/>
    <property type="project" value="UniProtKB-UniRule"/>
</dbReference>
<dbReference type="GO" id="GO:0010795">
    <property type="term" value="P:regulation of ubiquinone biosynthetic process"/>
    <property type="evidence" value="ECO:0007669"/>
    <property type="project" value="UniProtKB-UniRule"/>
</dbReference>
<dbReference type="GO" id="GO:0006744">
    <property type="term" value="P:ubiquinone biosynthetic process"/>
    <property type="evidence" value="ECO:0007669"/>
    <property type="project" value="UniProtKB-UniPathway"/>
</dbReference>
<dbReference type="CDD" id="cd13972">
    <property type="entry name" value="UbiB"/>
    <property type="match status" value="1"/>
</dbReference>
<dbReference type="HAMAP" id="MF_00414">
    <property type="entry name" value="UbiB"/>
    <property type="match status" value="1"/>
</dbReference>
<dbReference type="InterPro" id="IPR004147">
    <property type="entry name" value="ABC1_dom"/>
</dbReference>
<dbReference type="InterPro" id="IPR011009">
    <property type="entry name" value="Kinase-like_dom_sf"/>
</dbReference>
<dbReference type="InterPro" id="IPR010232">
    <property type="entry name" value="UbiB"/>
</dbReference>
<dbReference type="InterPro" id="IPR045308">
    <property type="entry name" value="UbiB_bact"/>
</dbReference>
<dbReference type="InterPro" id="IPR050154">
    <property type="entry name" value="UbiB_kinase"/>
</dbReference>
<dbReference type="NCBIfam" id="NF003404">
    <property type="entry name" value="PRK04750.1"/>
    <property type="match status" value="1"/>
</dbReference>
<dbReference type="NCBIfam" id="TIGR01982">
    <property type="entry name" value="UbiB"/>
    <property type="match status" value="1"/>
</dbReference>
<dbReference type="PANTHER" id="PTHR10566">
    <property type="entry name" value="CHAPERONE-ACTIVITY OF BC1 COMPLEX CABC1 -RELATED"/>
    <property type="match status" value="1"/>
</dbReference>
<dbReference type="PANTHER" id="PTHR10566:SF113">
    <property type="entry name" value="PROTEIN ACTIVITY OF BC1 COMPLEX KINASE 7, CHLOROPLASTIC"/>
    <property type="match status" value="1"/>
</dbReference>
<dbReference type="Pfam" id="PF03109">
    <property type="entry name" value="ABC1"/>
    <property type="match status" value="1"/>
</dbReference>
<dbReference type="SUPFAM" id="SSF56112">
    <property type="entry name" value="Protein kinase-like (PK-like)"/>
    <property type="match status" value="1"/>
</dbReference>
<feature type="chain" id="PRO_1000050037" description="Probable protein kinase UbiB">
    <location>
        <begin position="1"/>
        <end position="546"/>
    </location>
</feature>
<feature type="transmembrane region" description="Helical" evidence="1">
    <location>
        <begin position="496"/>
        <end position="516"/>
    </location>
</feature>
<feature type="transmembrane region" description="Helical" evidence="1">
    <location>
        <begin position="521"/>
        <end position="541"/>
    </location>
</feature>
<feature type="domain" description="Protein kinase" evidence="1">
    <location>
        <begin position="123"/>
        <end position="501"/>
    </location>
</feature>
<feature type="active site" description="Proton acceptor" evidence="1">
    <location>
        <position position="287"/>
    </location>
</feature>
<feature type="binding site" evidence="1">
    <location>
        <begin position="129"/>
        <end position="137"/>
    </location>
    <ligand>
        <name>ATP</name>
        <dbReference type="ChEBI" id="CHEBI:30616"/>
    </ligand>
</feature>
<feature type="binding site" evidence="1">
    <location>
        <position position="152"/>
    </location>
    <ligand>
        <name>ATP</name>
        <dbReference type="ChEBI" id="CHEBI:30616"/>
    </ligand>
</feature>
<sequence>MTPKEFKRLYRIITILLEQGIDELVPARYQPWPGRLARRSLFWLKKKQPDLSRGARIRLAFEALGPIFIKFGQMLSTRRDLLPPDIAEELAMLQDRVPPFCGQAARLKIEESLGCPVETLFDDFDETPLASASIAQVHTGRLKENGREIVIKVIRPDIEPVIEADLRLMQTLARLVARFVPQSARLRPIEVVEEYRKTILDELNLMREAANAIQLRRNFTGSDALYVPEVFTEHCREHVLVMERIYGIPVSDIPALEANGTNMKLLAERGVEVFFTQVFRDSFFHADMHPGNIFVSYEHPDNPLWIGIDCGIVGTLNREDKRYLAENFLAFFNRDYRRVAELHVESGWVPPDTKVDEFEFAIRTVLEPIFEKPLSEISFGHVLLNLFNTARRFNMAVQPQLVLLQKTLLYVEGLGRQLYPQLDLWQTAKPYLENWMHEQVGPKAVWNAIKEKAPFWAEKLPELPELVYETLRQTRHQQRHFDQMFADFRRHSRRQGQARYLLGVGASLLLVGVFLLTQKQHIEWGQISLAGAGLCWLLGWFKARSH</sequence>
<name>UBIB_AERS4</name>
<organism>
    <name type="scientific">Aeromonas salmonicida (strain A449)</name>
    <dbReference type="NCBI Taxonomy" id="382245"/>
    <lineage>
        <taxon>Bacteria</taxon>
        <taxon>Pseudomonadati</taxon>
        <taxon>Pseudomonadota</taxon>
        <taxon>Gammaproteobacteria</taxon>
        <taxon>Aeromonadales</taxon>
        <taxon>Aeromonadaceae</taxon>
        <taxon>Aeromonas</taxon>
    </lineage>
</organism>
<keyword id="KW-0067">ATP-binding</keyword>
<keyword id="KW-0997">Cell inner membrane</keyword>
<keyword id="KW-1003">Cell membrane</keyword>
<keyword id="KW-0418">Kinase</keyword>
<keyword id="KW-0472">Membrane</keyword>
<keyword id="KW-0547">Nucleotide-binding</keyword>
<keyword id="KW-0808">Transferase</keyword>
<keyword id="KW-0812">Transmembrane</keyword>
<keyword id="KW-1133">Transmembrane helix</keyword>
<keyword id="KW-0831">Ubiquinone biosynthesis</keyword>
<evidence type="ECO:0000255" key="1">
    <source>
        <dbReference type="HAMAP-Rule" id="MF_00414"/>
    </source>
</evidence>
<comment type="function">
    <text evidence="1">Is probably a protein kinase regulator of UbiI activity which is involved in aerobic coenzyme Q (ubiquinone) biosynthesis.</text>
</comment>
<comment type="pathway">
    <text>Cofactor biosynthesis; ubiquinone biosynthesis [regulation].</text>
</comment>
<comment type="subcellular location">
    <subcellularLocation>
        <location evidence="1">Cell inner membrane</location>
        <topology evidence="1">Multi-pass membrane protein</topology>
    </subcellularLocation>
</comment>
<comment type="similarity">
    <text evidence="1">Belongs to the ABC1 family. UbiB subfamily.</text>
</comment>
<protein>
    <recommendedName>
        <fullName evidence="1">Probable protein kinase UbiB</fullName>
        <ecNumber evidence="1">2.7.-.-</ecNumber>
    </recommendedName>
    <alternativeName>
        <fullName evidence="1">Ubiquinone biosynthesis protein UbiB</fullName>
    </alternativeName>
</protein>